<organism>
    <name type="scientific">Human immunodeficiency virus type 1 group M subtype F2 (isolate MP257)</name>
    <name type="common">HIV-1</name>
    <dbReference type="NCBI Taxonomy" id="388823"/>
    <lineage>
        <taxon>Viruses</taxon>
        <taxon>Riboviria</taxon>
        <taxon>Pararnavirae</taxon>
        <taxon>Artverviricota</taxon>
        <taxon>Revtraviricetes</taxon>
        <taxon>Ortervirales</taxon>
        <taxon>Retroviridae</taxon>
        <taxon>Orthoretrovirinae</taxon>
        <taxon>Lentivirus</taxon>
        <taxon>Human immunodeficiency virus type 1</taxon>
    </lineage>
</organism>
<sequence length="850" mass="96359">MRVREMQRNWQHLGRWGLLFLGILIICSAADKLWVTVYYGVPVWKEATTTLFCASDAKAYEREVHNVWATYACVPTDPSPQELVLGNVSEKFNMWKNNMVDQMHEDIISLWDESLKPCVKLTPLCVTLNCTKAIINVTSSNNTTLAPNVTISEEMKNCSFNITTEIRDKQKKEYALFYKLDVVQINNSNTSYRLINCNTSTLTQACPKVSFDPIPIHYCAPAGFAILKCNNKTFNGTGLCRNVSTVQCTHGIKPVVSTQLLLNGSLAEEKMIIRSENISDNTKTIIVQFKNPVKINCTRPNNNTRRSIHIGPGRAFYATGEIIGDTRKAHCNISEKQWYDTLIKIATEFKDQYNKTVGFQPSAGGDLEITTHSFNCRGEFFYCNTTILFNHTRVNDILSNNHTRENDTITLPCRIKQIVNMWQRVGQAMYAPPIAGKIQCNSNITGLLLTIDGGEGNESETLRPGGGDMRDNWRSELYKYKVVKIEPLGVAPTKAKRQVVQREKRAVGMGAMFLGFLGAAGSTMGAASITLTVQARNLLSGIVQQQSNLLKAIEAQQHLLQLTVWGIKQLQARILAVERYLKDQQLLGIWGCSGKLICPTTVPWNLSWSNKSQDEIWGNMTWMEWEKEIGNYTDTIYRLIESAQNQQEKNEQDLLALDKWDNLWNWFSITRWLWYIEIFIMIIGSLIGLRIVFTVLSIINRVRQGYSPLSLQTLIPNSRGPERPGGIEEEGGEQDKDRSIRLVSGFLALAWDDFRSLCVFSYHCLRNFILIAARTVDKGLKRGWEVLKYLWNLAQYWGQELKNSAISLLDRTAIAVAEGTDRIIEILQRAGRAVLNIPRRIRQGLERALL</sequence>
<evidence type="ECO:0000255" key="1">
    <source>
        <dbReference type="HAMAP-Rule" id="MF_04083"/>
    </source>
</evidence>
<evidence type="ECO:0000256" key="2">
    <source>
        <dbReference type="SAM" id="MobiDB-lite"/>
    </source>
</evidence>
<organismHost>
    <name type="scientific">Homo sapiens</name>
    <name type="common">Human</name>
    <dbReference type="NCBI Taxonomy" id="9606"/>
</organismHost>
<dbReference type="EMBL" id="AJ249237">
    <property type="protein sequence ID" value="CAB58982.1"/>
    <property type="status" value="ALT_INIT"/>
    <property type="molecule type" value="Genomic_RNA"/>
</dbReference>
<dbReference type="SMR" id="Q9QBZ0"/>
<dbReference type="GlyCosmos" id="Q9QBZ0">
    <property type="glycosylation" value="30 sites, No reported glycans"/>
</dbReference>
<dbReference type="Proteomes" id="UP000121652">
    <property type="component" value="Segment"/>
</dbReference>
<dbReference type="GO" id="GO:0044175">
    <property type="term" value="C:host cell endosome membrane"/>
    <property type="evidence" value="ECO:0007669"/>
    <property type="project" value="UniProtKB-SubCell"/>
</dbReference>
<dbReference type="GO" id="GO:0020002">
    <property type="term" value="C:host cell plasma membrane"/>
    <property type="evidence" value="ECO:0007669"/>
    <property type="project" value="UniProtKB-SubCell"/>
</dbReference>
<dbReference type="GO" id="GO:0016020">
    <property type="term" value="C:membrane"/>
    <property type="evidence" value="ECO:0007669"/>
    <property type="project" value="UniProtKB-UniRule"/>
</dbReference>
<dbReference type="GO" id="GO:0019031">
    <property type="term" value="C:viral envelope"/>
    <property type="evidence" value="ECO:0007669"/>
    <property type="project" value="UniProtKB-KW"/>
</dbReference>
<dbReference type="GO" id="GO:0055036">
    <property type="term" value="C:virion membrane"/>
    <property type="evidence" value="ECO:0007669"/>
    <property type="project" value="UniProtKB-SubCell"/>
</dbReference>
<dbReference type="GO" id="GO:0005198">
    <property type="term" value="F:structural molecule activity"/>
    <property type="evidence" value="ECO:0007669"/>
    <property type="project" value="UniProtKB-UniRule"/>
</dbReference>
<dbReference type="GO" id="GO:0075512">
    <property type="term" value="P:clathrin-dependent endocytosis of virus by host cell"/>
    <property type="evidence" value="ECO:0007669"/>
    <property type="project" value="UniProtKB-UniRule"/>
</dbReference>
<dbReference type="GO" id="GO:0039654">
    <property type="term" value="P:fusion of virus membrane with host endosome membrane"/>
    <property type="evidence" value="ECO:0007669"/>
    <property type="project" value="UniProtKB-UniRule"/>
</dbReference>
<dbReference type="GO" id="GO:0019064">
    <property type="term" value="P:fusion of virus membrane with host plasma membrane"/>
    <property type="evidence" value="ECO:0007669"/>
    <property type="project" value="UniProtKB-UniRule"/>
</dbReference>
<dbReference type="GO" id="GO:1903908">
    <property type="term" value="P:positive regulation of plasma membrane raft polarization"/>
    <property type="evidence" value="ECO:0007669"/>
    <property type="project" value="UniProtKB-UniRule"/>
</dbReference>
<dbReference type="GO" id="GO:1903911">
    <property type="term" value="P:positive regulation of receptor clustering"/>
    <property type="evidence" value="ECO:0007669"/>
    <property type="project" value="UniProtKB-UniRule"/>
</dbReference>
<dbReference type="GO" id="GO:0019082">
    <property type="term" value="P:viral protein processing"/>
    <property type="evidence" value="ECO:0007669"/>
    <property type="project" value="UniProtKB-UniRule"/>
</dbReference>
<dbReference type="GO" id="GO:0019062">
    <property type="term" value="P:virion attachment to host cell"/>
    <property type="evidence" value="ECO:0007669"/>
    <property type="project" value="UniProtKB-UniRule"/>
</dbReference>
<dbReference type="CDD" id="cd09909">
    <property type="entry name" value="HIV-1-like_HR1-HR2"/>
    <property type="match status" value="1"/>
</dbReference>
<dbReference type="FunFam" id="1.10.287.210:FF:000001">
    <property type="entry name" value="Envelope glycoprotein gp160"/>
    <property type="match status" value="1"/>
</dbReference>
<dbReference type="FunFam" id="2.170.40.20:FF:000003">
    <property type="entry name" value="Envelope glycoprotein gp160"/>
    <property type="match status" value="1"/>
</dbReference>
<dbReference type="FunFam" id="2.170.40.20:FF:000004">
    <property type="entry name" value="Envelope glycoprotein gp160"/>
    <property type="match status" value="1"/>
</dbReference>
<dbReference type="Gene3D" id="1.10.287.210">
    <property type="match status" value="1"/>
</dbReference>
<dbReference type="Gene3D" id="2.170.40.20">
    <property type="entry name" value="Human immunodeficiency virus 1, Gp160, envelope glycoprotein"/>
    <property type="match status" value="2"/>
</dbReference>
<dbReference type="Gene3D" id="1.20.5.490">
    <property type="entry name" value="Single helix bin"/>
    <property type="match status" value="1"/>
</dbReference>
<dbReference type="HAMAP" id="MF_04083">
    <property type="entry name" value="HIV_ENV"/>
    <property type="match status" value="1"/>
</dbReference>
<dbReference type="InterPro" id="IPR036377">
    <property type="entry name" value="Gp120_core_sf"/>
</dbReference>
<dbReference type="InterPro" id="IPR037527">
    <property type="entry name" value="Gp160"/>
</dbReference>
<dbReference type="InterPro" id="IPR000328">
    <property type="entry name" value="GP41-like"/>
</dbReference>
<dbReference type="InterPro" id="IPR000777">
    <property type="entry name" value="HIV1_Gp120"/>
</dbReference>
<dbReference type="Pfam" id="PF00516">
    <property type="entry name" value="GP120"/>
    <property type="match status" value="1"/>
</dbReference>
<dbReference type="Pfam" id="PF00517">
    <property type="entry name" value="GP41"/>
    <property type="match status" value="1"/>
</dbReference>
<dbReference type="SUPFAM" id="SSF56502">
    <property type="entry name" value="gp120 core"/>
    <property type="match status" value="2"/>
</dbReference>
<dbReference type="SUPFAM" id="SSF58069">
    <property type="entry name" value="Virus ectodomain"/>
    <property type="match status" value="1"/>
</dbReference>
<comment type="function">
    <molecule>Envelope glycoprotein gp160</molecule>
    <text evidence="1">Oligomerizes in the host endoplasmic reticulum into predominantly trimers. In a second time, gp160 transits in the host Golgi, where glycosylation is completed. The precursor is then proteolytically cleaved in the trans-Golgi and thereby activated by cellular furin or furin-like proteases to produce gp120 and gp41.</text>
</comment>
<comment type="function">
    <molecule>Surface protein gp120</molecule>
    <text evidence="1">Attaches the virus to the host lymphoid cell by binding to the primary receptor CD4. This interaction induces a structural rearrangement creating a high affinity binding site for a chemokine coreceptor like CXCR4 and/or CCR5. Acts as a ligand for CD209/DC-SIGN and CLEC4M/DC-SIGNR, which are respectively found on dendritic cells (DCs), and on endothelial cells of liver sinusoids and lymph node sinuses. These interactions allow capture of viral particles at mucosal surfaces by these cells and subsequent transmission to permissive cells. HIV subverts the migration properties of dendritic cells to gain access to CD4+ T-cells in lymph nodes. Virus transmission to permissive T-cells occurs either in trans (without DCs infection, through viral capture and transmission), or in cis (following DCs productive infection, through the usual CD4-gp120 interaction), thereby inducing a robust infection. In trans infection, bound virions remain infectious over days and it is proposed that they are not degraded, but protected in non-lysosomal acidic organelles within the DCs close to the cell membrane thus contributing to the viral infectious potential during DCs' migration from the periphery to the lymphoid tissues. On arrival at lymphoid tissues, intact virions recycle back to DCs' cell surface allowing virus transmission to CD4+ T-cells.</text>
</comment>
<comment type="function">
    <molecule>Transmembrane protein gp41</molecule>
    <text evidence="1">Acts as a class I viral fusion protein. Under the current model, the protein has at least 3 conformational states: pre-fusion native state, pre-hairpin intermediate state, and post-fusion hairpin state. During fusion of viral and target intracellular membranes, the coiled coil regions (heptad repeats) assume a trimer-of-hairpins structure, positioning the fusion peptide in close proximity to the C-terminal region of the ectodomain. The formation of this structure appears to drive apposition and subsequent fusion of viral and target cell membranes. Complete fusion occurs in host cell endosomes and is dynamin-dependent, however some lipid transfer might occur at the plasma membrane. The virus undergoes clathrin-dependent internalization long before endosomal fusion, thus minimizing the surface exposure of conserved viral epitopes during fusion and reducing the efficacy of inhibitors targeting these epitopes. Membranes fusion leads to delivery of the nucleocapsid into the cytoplasm.</text>
</comment>
<comment type="subunit">
    <molecule>Surface protein gp120</molecule>
    <text evidence="1">The mature envelope protein (Env) consists of a homotrimer of non-covalently associated gp120-gp41 heterodimers. The resulting complex protrudes from the virus surface as a spike. There seems to be as few as 10 spikes on the average virion. Interacts with host CD4, CCR5 and CXCR4. Gp120 also interacts with the C-type lectins CD209/DC-SIGN and CLEC4M/DC-SIGNR (collectively referred to as DC-SIGN(R)). Gp120 and gp41 interact with GalCer. Gp120 interacts with host ITGA4/ITGB7 complex; on CD4+ T-cells, this interaction results in rapid activation of integrin ITGAL/LFA-1, which facilitates efficient cell-to-cell spreading of HIV-1. Gp120 interacts with cell-associated heparan sulfate; this interaction increases virus infectivity on permissive cells and may be involved in infection of CD4- cells.</text>
</comment>
<comment type="subunit">
    <molecule>Transmembrane protein gp41</molecule>
    <text evidence="1">The mature envelope protein (Env) consists of a homotrimer of non-covalently associated gp120-gp41 heterodimers. The resulting complex protrudes from the virus surface as a spike. There seems to be as few as 10 spikes on the average virion.</text>
</comment>
<comment type="subcellular location">
    <molecule>Surface protein gp120</molecule>
    <subcellularLocation>
        <location evidence="1">Virion membrane</location>
        <topology evidence="1">Peripheral membrane protein</topology>
    </subcellularLocation>
    <subcellularLocation>
        <location evidence="1">Host cell membrane</location>
        <topology evidence="1">Peripheral membrane protein</topology>
    </subcellularLocation>
    <subcellularLocation>
        <location evidence="1">Host endosome membrane</location>
        <topology evidence="1">Single-pass type I membrane protein</topology>
    </subcellularLocation>
    <text evidence="1">The surface protein is not anchored to the viral envelope, but associates with the extravirion surface through its binding to TM. It is probably concentrated at the site of budding and incorporated into the virions possibly by contacts between the cytoplasmic tail of Env and the N-terminus of Gag.</text>
</comment>
<comment type="subcellular location">
    <molecule>Transmembrane protein gp41</molecule>
    <subcellularLocation>
        <location evidence="1">Virion membrane</location>
        <topology evidence="1">Single-pass type I membrane protein</topology>
    </subcellularLocation>
    <subcellularLocation>
        <location evidence="1">Host cell membrane</location>
        <topology evidence="1">Single-pass type I membrane protein</topology>
    </subcellularLocation>
    <subcellularLocation>
        <location evidence="1">Host endosome membrane</location>
        <topology evidence="1">Single-pass type I membrane protein</topology>
    </subcellularLocation>
    <text evidence="1">It is probably concentrated at the site of budding and incorporated into the virions possibly by contacts between the cytoplasmic tail of Env and the N-terminus of Gag.</text>
</comment>
<comment type="domain">
    <text evidence="1">Some of the most genetically diverse regions of the viral genome are present in Env. They are called variable regions 1 through 5 (V1 through V5). Coreceptor usage of gp120 is determined mainly by the primary structure of the third variable region (V3) in the outer domain of gp120. The sequence of V3 determines which coreceptor, CCR5 and/or CXCR4 (corresponding to R5/macrophage, X4/T cell and R5X4/T cell and macrophage tropism), is used to trigger the fusion potential of the Env complex, and hence which cells the virus can infect. Binding to CCR5 involves a region adjacent in addition to V3.</text>
</comment>
<comment type="domain">
    <text evidence="1">The membrane proximal external region (MPER) present in gp41 is a tryptophan-rich region recognized by the antibodies 2F5, Z13, and 4E10. MPER seems to play a role in fusion.</text>
</comment>
<comment type="domain">
    <text evidence="1">The 17 amino acids long immunosuppressive region is present in many retroviral envelope proteins. Synthetic peptides derived from this relatively conserved sequence inhibit immune function in vitro and in vivo.</text>
</comment>
<comment type="domain">
    <text evidence="1">The YXXL motif is involved in determining the exact site of viral release at the surface of infected mononuclear cells and promotes endocytosis. YXXL and di-leucine endocytosis motifs interact directly or indirectly with the clathrin adapter complexes, opperate independently, and their activities are not additive.</text>
</comment>
<comment type="domain">
    <text evidence="1">The CD4-binding region is targeted by the antibody b12.</text>
</comment>
<comment type="PTM">
    <text evidence="1">Highly glycosylated by host. The high number of glycan on the protein is reffered to as 'glycan shield' because it contributes to hide protein sequence from adaptive immune system.</text>
</comment>
<comment type="PTM">
    <text evidence="1">Palmitoylation of the transmembrane protein and of Env polyprotein (prior to its proteolytic cleavage) is essential for their association with host cell membrane lipid rafts. Palmitoylation is therefore required for envelope trafficking to classical lipid rafts, but not for viral replication.</text>
</comment>
<comment type="PTM">
    <text evidence="1">Specific enzymatic cleavages in vivo yield mature proteins. Envelope glycoproteins are synthesized as an inactive precursor that is heavily N-glycosylated and processed likely by host cell furin in the Golgi to yield the mature SU and TM proteins. The cleavage site between SU and TM requires the minimal sequence [KR]-X-[KR]-R. About 2 of the 9 disulfide bonds of gp41 are reduced by P4HB/PDI, following binding to CD4 receptor.</text>
</comment>
<comment type="miscellaneous">
    <text evidence="1">Inhibitors targeting HIV-1 viral envelope proteins are used as antiretroviral drugs. Attachment of virions to the cell surface via non-specific interactions and CD4 binding can be blocked by inhibitors that include cyanovirin-N, cyclotriazadisulfonamide analogs, PRO 2000, TNX 355 and PRO 542. In addition, BMS 806 can block CD4-induced conformational changes. Env interactions with the coreceptor molecules can be targeted by CCR5 antagonists including SCH-D, maraviroc (UK 427857) and aplaviroc (GW 873140), and the CXCR4 antagonist AMD 070. Fusion of viral and cellular membranes can be inhibited by peptides such as enfuvirtide and tifuvirtide (T 1249). Resistance to inhibitors associated with mutations in Env are observed. Most of the time, single mutations confer only a modest reduction in drug susceptibility. Combination of several mutations is usually required to develop a high-level drug resistance.</text>
</comment>
<comment type="miscellaneous">
    <text evidence="1">HIV-1 lineages are divided in three main groups, M (for Major), O (for Outlier), and N (for New, or Non-M, Non-O). The vast majority of strains found worldwide belong to the group M. Group O seems to be endemic to and largely confined to Cameroon and neighboring countries in West Central Africa, where these viruses represent a small minority of HIV-1 strains. The group N is represented by a limited number of isolates from Cameroonian persons. The group M is further subdivided in 9 clades or subtypes (A to D, F to H, J and K).</text>
</comment>
<comment type="similarity">
    <text evidence="1">Belongs to the HIV-1 env protein family.</text>
</comment>
<comment type="sequence caution">
    <conflict type="erroneous initiation">
        <sequence resource="EMBL-CDS" id="CAB58982"/>
    </conflict>
</comment>
<comment type="online information" name="hivdb">
    <link uri="https://hivdb.stanford.edu"/>
    <text>HIV drug resistance database</text>
</comment>
<comment type="online information" name="HIV drug resistance mutations">
    <link uri="https://www.iasusa.org/hiv-drug-resistance/hiv-drug-resistance-mutations/"/>
</comment>
<proteinExistence type="inferred from homology"/>
<accession>Q9QBZ0</accession>
<keyword id="KW-0014">AIDS</keyword>
<keyword id="KW-0053">Apoptosis</keyword>
<keyword id="KW-1165">Clathrin-mediated endocytosis of virus by host</keyword>
<keyword id="KW-0165">Cleavage on pair of basic residues</keyword>
<keyword id="KW-0175">Coiled coil</keyword>
<keyword id="KW-1015">Disulfide bond</keyword>
<keyword id="KW-1170">Fusion of virus membrane with host endosomal membrane</keyword>
<keyword id="KW-1168">Fusion of virus membrane with host membrane</keyword>
<keyword id="KW-0325">Glycoprotein</keyword>
<keyword id="KW-1032">Host cell membrane</keyword>
<keyword id="KW-1039">Host endosome</keyword>
<keyword id="KW-1043">Host membrane</keyword>
<keyword id="KW-0945">Host-virus interaction</keyword>
<keyword id="KW-0449">Lipoprotein</keyword>
<keyword id="KW-0472">Membrane</keyword>
<keyword id="KW-0564">Palmitate</keyword>
<keyword id="KW-0732">Signal</keyword>
<keyword id="KW-0812">Transmembrane</keyword>
<keyword id="KW-1133">Transmembrane helix</keyword>
<keyword id="KW-1161">Viral attachment to host cell</keyword>
<keyword id="KW-0261">Viral envelope protein</keyword>
<keyword id="KW-0899">Viral immunoevasion</keyword>
<keyword id="KW-1162">Viral penetration into host cytoplasm</keyword>
<keyword id="KW-0946">Virion</keyword>
<keyword id="KW-1164">Virus endocytosis by host</keyword>
<keyword id="KW-1160">Virus entry into host cell</keyword>
<gene>
    <name evidence="1" type="primary">env</name>
</gene>
<protein>
    <recommendedName>
        <fullName evidence="1">Envelope glycoprotein gp160</fullName>
    </recommendedName>
    <alternativeName>
        <fullName evidence="1">Env polyprotein</fullName>
    </alternativeName>
    <component>
        <recommendedName>
            <fullName evidence="1">Surface protein gp120</fullName>
            <shortName evidence="1">SU</shortName>
        </recommendedName>
        <alternativeName>
            <fullName evidence="1">Glycoprotein 120</fullName>
            <shortName evidence="1">gp120</shortName>
        </alternativeName>
    </component>
    <component>
        <recommendedName>
            <fullName evidence="1">Transmembrane protein gp41</fullName>
            <shortName evidence="1">TM</shortName>
        </recommendedName>
        <alternativeName>
            <fullName evidence="1">Glycoprotein 41</fullName>
            <shortName evidence="1">gp41</shortName>
        </alternativeName>
    </component>
</protein>
<feature type="signal peptide" evidence="1">
    <location>
        <begin position="1"/>
        <end position="31"/>
    </location>
</feature>
<feature type="chain" id="PRO_0000244678" description="Envelope glycoprotein gp160" evidence="1">
    <location>
        <begin position="32"/>
        <end position="850"/>
    </location>
</feature>
<feature type="chain" id="PRO_0000244679" description="Surface protein gp120" evidence="1">
    <location>
        <begin position="32"/>
        <end position="505"/>
    </location>
</feature>
<feature type="chain" id="PRO_0000244680" description="Transmembrane protein gp41" evidence="1">
    <location>
        <begin position="506"/>
        <end position="850"/>
    </location>
</feature>
<feature type="topological domain" description="Extracellular" evidence="1">
    <location>
        <begin position="32"/>
        <end position="678"/>
    </location>
</feature>
<feature type="transmembrane region" description="Helical" evidence="1">
    <location>
        <begin position="679"/>
        <end position="699"/>
    </location>
</feature>
<feature type="topological domain" description="Cytoplasmic" evidence="1">
    <location>
        <begin position="700"/>
        <end position="850"/>
    </location>
</feature>
<feature type="region of interest" description="V1" evidence="1">
    <location>
        <begin position="130"/>
        <end position="157"/>
    </location>
</feature>
<feature type="region of interest" description="V2" evidence="1">
    <location>
        <begin position="158"/>
        <end position="197"/>
    </location>
</feature>
<feature type="region of interest" description="V3" evidence="1">
    <location>
        <begin position="297"/>
        <end position="330"/>
    </location>
</feature>
<feature type="region of interest" description="CD4-binding loop" evidence="1">
    <location>
        <begin position="362"/>
        <end position="372"/>
    </location>
</feature>
<feature type="region of interest" description="V4" evidence="1">
    <location>
        <begin position="383"/>
        <end position="413"/>
    </location>
</feature>
<feature type="region of interest" description="V5">
    <location>
        <begin position="456"/>
        <end position="465"/>
    </location>
</feature>
<feature type="region of interest" description="V5" evidence="1">
    <location>
        <begin position="458"/>
        <end position="465"/>
    </location>
</feature>
<feature type="region of interest" description="Fusion peptide" evidence="1">
    <location>
        <begin position="506"/>
        <end position="526"/>
    </location>
</feature>
<feature type="region of interest" description="Immunosuppression" evidence="1">
    <location>
        <begin position="568"/>
        <end position="586"/>
    </location>
</feature>
<feature type="region of interest" description="MPER; binding to GalCer" evidence="1">
    <location>
        <begin position="656"/>
        <end position="677"/>
    </location>
</feature>
<feature type="region of interest" description="Disordered" evidence="2">
    <location>
        <begin position="716"/>
        <end position="736"/>
    </location>
</feature>
<feature type="coiled-coil region" evidence="1">
    <location>
        <begin position="627"/>
        <end position="661"/>
    </location>
</feature>
<feature type="short sequence motif" description="YXXL motif; contains endocytosis signal" evidence="1">
    <location>
        <begin position="706"/>
        <end position="709"/>
    </location>
</feature>
<feature type="short sequence motif" description="Di-leucine internalization motif" evidence="1">
    <location>
        <begin position="849"/>
        <end position="850"/>
    </location>
</feature>
<feature type="site" description="Cleavage; by host furin" evidence="1">
    <location>
        <begin position="505"/>
        <end position="506"/>
    </location>
</feature>
<feature type="lipid moiety-binding region" description="S-palmitoyl cysteine; by host" evidence="1">
    <location>
        <position position="758"/>
    </location>
</feature>
<feature type="glycosylation site" description="N-linked (GlcNAc...) asparagine; by host" evidence="1">
    <location>
        <position position="87"/>
    </location>
</feature>
<feature type="glycosylation site" description="N-linked (GlcNAc...) asparagine; by host" evidence="1">
    <location>
        <position position="129"/>
    </location>
</feature>
<feature type="glycosylation site" description="N-linked (GlcNAc...) asparagine; by host" evidence="1">
    <location>
        <position position="136"/>
    </location>
</feature>
<feature type="glycosylation site" description="N-linked (GlcNAc...) asparagine; by host" evidence="1">
    <location>
        <position position="141"/>
    </location>
</feature>
<feature type="glycosylation site" description="N-linked (GlcNAc...) asparagine; by host" evidence="1">
    <location>
        <position position="142"/>
    </location>
</feature>
<feature type="glycosylation site" description="N-linked (GlcNAc...) asparagine; by host" evidence="1">
    <location>
        <position position="148"/>
    </location>
</feature>
<feature type="glycosylation site" description="N-linked (GlcNAc...) asparagine; by host" evidence="1">
    <location>
        <position position="157"/>
    </location>
</feature>
<feature type="glycosylation site" description="N-linked (GlcNAc...) asparagine; by host" evidence="1">
    <location>
        <position position="161"/>
    </location>
</feature>
<feature type="glycosylation site" description="N-linked (GlcNAc...) asparagine; by host" evidence="1">
    <location>
        <position position="186"/>
    </location>
</feature>
<feature type="glycosylation site" description="N-linked (GlcNAc...) asparagine; by host" evidence="1">
    <location>
        <position position="189"/>
    </location>
</feature>
<feature type="glycosylation site" description="N-linked (GlcNAc...) asparagine; by host" evidence="1">
    <location>
        <position position="198"/>
    </location>
</feature>
<feature type="glycosylation site" description="N-linked (GlcNAc...) asparagine; by host" evidence="1">
    <location>
        <position position="231"/>
    </location>
</feature>
<feature type="glycosylation site" description="N-linked (GlcNAc...) asparagine; by host" evidence="1">
    <location>
        <position position="235"/>
    </location>
</feature>
<feature type="glycosylation site" description="N-linked (GlcNAc...) asparagine; by host" evidence="1">
    <location>
        <position position="242"/>
    </location>
</feature>
<feature type="glycosylation site" description="N-linked (GlcNAc...) asparagine; by host" evidence="1">
    <location>
        <position position="263"/>
    </location>
</feature>
<feature type="glycosylation site" description="N-linked (GlcNAc...) asparagine; by host" evidence="1">
    <location>
        <position position="277"/>
    </location>
</feature>
<feature type="glycosylation site" description="N-linked (GlcNAc...) asparagine; by host" evidence="1">
    <location>
        <position position="296"/>
    </location>
</feature>
<feature type="glycosylation site" description="N-linked (GlcNAc...) asparagine; by host" evidence="1">
    <location>
        <position position="302"/>
    </location>
</feature>
<feature type="glycosylation site" description="N-linked (GlcNAc...) asparagine; by host" evidence="1">
    <location>
        <position position="332"/>
    </location>
</feature>
<feature type="glycosylation site" description="N-linked (GlcNAc...) asparagine; by host" evidence="1">
    <location>
        <position position="354"/>
    </location>
</feature>
<feature type="glycosylation site" description="N-linked (GlcNAc...) asparagine; by host" evidence="1">
    <location>
        <position position="384"/>
    </location>
</feature>
<feature type="glycosylation site" description="N-linked (GlcNAc...) asparagine; by host" evidence="1">
    <location>
        <position position="390"/>
    </location>
</feature>
<feature type="glycosylation site" description="N-linked (GlcNAc...) asparagine; by host" evidence="1">
    <location>
        <position position="401"/>
    </location>
</feature>
<feature type="glycosylation site" description="N-linked (GlcNAc...) asparagine; by host" evidence="1">
    <location>
        <position position="406"/>
    </location>
</feature>
<feature type="glycosylation site" description="N-linked (GlcNAc...) asparagine; by host" evidence="1">
    <location>
        <position position="443"/>
    </location>
</feature>
<feature type="glycosylation site" description="N-linked (GlcNAc...) asparagine; by host" evidence="1">
    <location>
        <position position="457"/>
    </location>
</feature>
<feature type="glycosylation site" description="N-linked (GlcNAc...) asparagine; by host" evidence="1">
    <location>
        <position position="605"/>
    </location>
</feature>
<feature type="glycosylation site" description="N-linked (GlcNAc...) asparagine; by host" evidence="1">
    <location>
        <position position="610"/>
    </location>
</feature>
<feature type="glycosylation site" description="N-linked (GlcNAc...) asparagine; by host" evidence="1">
    <location>
        <position position="619"/>
    </location>
</feature>
<feature type="glycosylation site" description="N-linked (GlcNAc...) asparagine; by host" evidence="1">
    <location>
        <position position="631"/>
    </location>
</feature>
<feature type="disulfide bond" evidence="1">
    <location>
        <begin position="53"/>
        <end position="73"/>
    </location>
</feature>
<feature type="disulfide bond" evidence="1">
    <location>
        <begin position="118"/>
        <end position="206"/>
    </location>
</feature>
<feature type="disulfide bond" evidence="1">
    <location>
        <begin position="125"/>
        <end position="197"/>
    </location>
</feature>
<feature type="disulfide bond" evidence="1">
    <location>
        <begin position="130"/>
        <end position="158"/>
    </location>
</feature>
<feature type="disulfide bond" evidence="1">
    <location>
        <begin position="219"/>
        <end position="248"/>
    </location>
</feature>
<feature type="disulfide bond" evidence="1">
    <location>
        <begin position="229"/>
        <end position="240"/>
    </location>
</feature>
<feature type="disulfide bond" evidence="1">
    <location>
        <begin position="297"/>
        <end position="331"/>
    </location>
</feature>
<feature type="disulfide bond" evidence="1">
    <location>
        <begin position="376"/>
        <end position="440"/>
    </location>
</feature>
<feature type="disulfide bond" evidence="1">
    <location>
        <begin position="383"/>
        <end position="413"/>
    </location>
</feature>
<feature type="disulfide bond" evidence="1">
    <location>
        <begin position="592"/>
        <end position="598"/>
    </location>
</feature>
<reference key="1">
    <citation type="journal article" date="2000" name="AIDS Res. Hum. Retroviruses">
        <title>Near-full-length genome sequencing of divergent African HIV type 1 subtype F viruses leads to the identification of a new HIV type 1 subtype designated K.</title>
        <authorList>
            <person name="Triques K."/>
            <person name="Bourgeois A."/>
            <person name="Vidale N."/>
            <person name="Mpoudi-Ngole E."/>
            <person name="Mulanga-Kabeya C."/>
            <person name="Nzilambi N."/>
            <person name="Torimiro N."/>
            <person name="Saman E."/>
            <person name="Delaporte E."/>
            <person name="Peeters M."/>
        </authorList>
    </citation>
    <scope>NUCLEOTIDE SEQUENCE [GENOMIC RNA]</scope>
</reference>
<reference key="2">
    <citation type="journal article" date="2003" name="APMIS">
        <title>Pathogens target DC-SIGN to influence their fate DC-SIGN functions as a pathogen receptor with broad specificity.</title>
        <authorList>
            <person name="Geijtenbeek T.B."/>
            <person name="van Kooyk Y."/>
        </authorList>
    </citation>
    <scope>REVIEW</scope>
</reference>
<reference key="3">
    <citation type="journal article" date="2003" name="Biochim. Biophys. Acta">
        <title>The HIV Env-mediated fusion reaction.</title>
        <authorList>
            <person name="Gallo S.A."/>
            <person name="Finnegan C.M."/>
            <person name="Viard M."/>
            <person name="Raviv Y."/>
            <person name="Dimitrov A."/>
            <person name="Rawat S.S."/>
            <person name="Puri A."/>
            <person name="Durell S."/>
            <person name="Blumenthal R."/>
        </authorList>
    </citation>
    <scope>REVIEW</scope>
</reference>
<reference key="4">
    <citation type="journal article" date="2005" name="Cell Death Differ.">
        <title>Mechanisms of apoptosis induction by the HIV-1 envelope.</title>
        <authorList>
            <person name="Perfettini J.-L."/>
            <person name="Castedo M."/>
            <person name="Roumier T."/>
            <person name="Andreau K."/>
            <person name="Nardacci R."/>
            <person name="Piacentini M."/>
            <person name="Kroemer G."/>
        </authorList>
    </citation>
    <scope>REVIEW</scope>
</reference>
<reference key="5">
    <citation type="journal article" date="2005" name="AIDS Res. Hum. Retroviruses">
        <title>V3: HIV's switch-hitter.</title>
        <authorList>
            <person name="Hartley O."/>
            <person name="Klasse P.J."/>
            <person name="Sattentau Q.J."/>
            <person name="Moore J.P."/>
        </authorList>
    </citation>
    <scope>REVIEW</scope>
</reference>
<reference key="6">
    <citation type="journal article" date="2005" name="Drugs">
        <title>Emerging drug targets for antiretroviral therapy.</title>
        <authorList>
            <person name="Reeves J.D."/>
            <person name="Piefer A.J."/>
        </authorList>
    </citation>
    <scope>REVIEW</scope>
</reference>
<reference key="7">
    <citation type="journal article" date="2006" name="EMBO J.">
        <title>HIV and the chemokine system: 10 years later.</title>
        <authorList>
            <person name="Lusso P."/>
        </authorList>
    </citation>
    <scope>REVIEW</scope>
</reference>
<name>ENV_HV1M2</name>